<name>RL4_FRATO</name>
<accession>Q0BNS6</accession>
<organism>
    <name type="scientific">Francisella tularensis subsp. holarctica (strain OSU18)</name>
    <dbReference type="NCBI Taxonomy" id="393011"/>
    <lineage>
        <taxon>Bacteria</taxon>
        <taxon>Pseudomonadati</taxon>
        <taxon>Pseudomonadota</taxon>
        <taxon>Gammaproteobacteria</taxon>
        <taxon>Thiotrichales</taxon>
        <taxon>Francisellaceae</taxon>
        <taxon>Francisella</taxon>
    </lineage>
</organism>
<proteinExistence type="inferred from homology"/>
<comment type="function">
    <text evidence="1">One of the primary rRNA binding proteins, this protein initially binds near the 5'-end of the 23S rRNA. It is important during the early stages of 50S assembly. It makes multiple contacts with different domains of the 23S rRNA in the assembled 50S subunit and ribosome.</text>
</comment>
<comment type="function">
    <text evidence="1">Forms part of the polypeptide exit tunnel.</text>
</comment>
<comment type="subunit">
    <text evidence="1">Part of the 50S ribosomal subunit.</text>
</comment>
<comment type="similarity">
    <text evidence="1">Belongs to the universal ribosomal protein uL4 family.</text>
</comment>
<protein>
    <recommendedName>
        <fullName evidence="1">Large ribosomal subunit protein uL4</fullName>
    </recommendedName>
    <alternativeName>
        <fullName evidence="3">50S ribosomal protein L4</fullName>
    </alternativeName>
</protein>
<sequence length="207" mass="22553">MDLNIKSLAGQEAGSLGVAEGVFAADYNEALIHQVVVAYMAGARQGTKAQKTRSEVSGGGAKPWRQKGTGRARAGTIRSPIFRKGGVTFAAKPKSYKQKVNRKMYSGAVKSILSELLRSGRMTIVEELKLETPKTREFKSVIDSLGVKDVLFVVGVEEFSENLYLSSRNLKNVAVCDSVEINPVSLVCFENVVLTKKAIKEIEEKLV</sequence>
<evidence type="ECO:0000255" key="1">
    <source>
        <dbReference type="HAMAP-Rule" id="MF_01328"/>
    </source>
</evidence>
<evidence type="ECO:0000256" key="2">
    <source>
        <dbReference type="SAM" id="MobiDB-lite"/>
    </source>
</evidence>
<evidence type="ECO:0000305" key="3"/>
<dbReference type="EMBL" id="CP000437">
    <property type="protein sequence ID" value="ABI82258.1"/>
    <property type="molecule type" value="Genomic_DNA"/>
</dbReference>
<dbReference type="RefSeq" id="WP_003021600.1">
    <property type="nucleotide sequence ID" value="NC_017463.1"/>
</dbReference>
<dbReference type="SMR" id="Q0BNS6"/>
<dbReference type="GeneID" id="75264260"/>
<dbReference type="KEGG" id="fth:FTH_0232"/>
<dbReference type="GO" id="GO:1990904">
    <property type="term" value="C:ribonucleoprotein complex"/>
    <property type="evidence" value="ECO:0007669"/>
    <property type="project" value="UniProtKB-KW"/>
</dbReference>
<dbReference type="GO" id="GO:0005840">
    <property type="term" value="C:ribosome"/>
    <property type="evidence" value="ECO:0007669"/>
    <property type="project" value="UniProtKB-KW"/>
</dbReference>
<dbReference type="GO" id="GO:0019843">
    <property type="term" value="F:rRNA binding"/>
    <property type="evidence" value="ECO:0007669"/>
    <property type="project" value="UniProtKB-UniRule"/>
</dbReference>
<dbReference type="GO" id="GO:0003735">
    <property type="term" value="F:structural constituent of ribosome"/>
    <property type="evidence" value="ECO:0007669"/>
    <property type="project" value="InterPro"/>
</dbReference>
<dbReference type="GO" id="GO:0006412">
    <property type="term" value="P:translation"/>
    <property type="evidence" value="ECO:0007669"/>
    <property type="project" value="UniProtKB-UniRule"/>
</dbReference>
<dbReference type="Gene3D" id="3.40.1370.10">
    <property type="match status" value="1"/>
</dbReference>
<dbReference type="HAMAP" id="MF_01328_B">
    <property type="entry name" value="Ribosomal_uL4_B"/>
    <property type="match status" value="1"/>
</dbReference>
<dbReference type="InterPro" id="IPR002136">
    <property type="entry name" value="Ribosomal_uL4"/>
</dbReference>
<dbReference type="InterPro" id="IPR013005">
    <property type="entry name" value="Ribosomal_uL4-like"/>
</dbReference>
<dbReference type="InterPro" id="IPR023574">
    <property type="entry name" value="Ribosomal_uL4_dom_sf"/>
</dbReference>
<dbReference type="NCBIfam" id="TIGR03953">
    <property type="entry name" value="rplD_bact"/>
    <property type="match status" value="1"/>
</dbReference>
<dbReference type="PANTHER" id="PTHR10746">
    <property type="entry name" value="50S RIBOSOMAL PROTEIN L4"/>
    <property type="match status" value="1"/>
</dbReference>
<dbReference type="PANTHER" id="PTHR10746:SF6">
    <property type="entry name" value="LARGE RIBOSOMAL SUBUNIT PROTEIN UL4M"/>
    <property type="match status" value="1"/>
</dbReference>
<dbReference type="Pfam" id="PF00573">
    <property type="entry name" value="Ribosomal_L4"/>
    <property type="match status" value="1"/>
</dbReference>
<dbReference type="SUPFAM" id="SSF52166">
    <property type="entry name" value="Ribosomal protein L4"/>
    <property type="match status" value="1"/>
</dbReference>
<gene>
    <name evidence="1" type="primary">rplD</name>
    <name type="ordered locus">FTH_0232</name>
</gene>
<keyword id="KW-0687">Ribonucleoprotein</keyword>
<keyword id="KW-0689">Ribosomal protein</keyword>
<keyword id="KW-0694">RNA-binding</keyword>
<keyword id="KW-0699">rRNA-binding</keyword>
<feature type="chain" id="PRO_1000052404" description="Large ribosomal subunit protein uL4">
    <location>
        <begin position="1"/>
        <end position="207"/>
    </location>
</feature>
<feature type="region of interest" description="Disordered" evidence="2">
    <location>
        <begin position="48"/>
        <end position="70"/>
    </location>
</feature>
<reference key="1">
    <citation type="journal article" date="2006" name="J. Bacteriol.">
        <title>Chromosome rearrangement and diversification of Francisella tularensis revealed by the type B (OSU18) genome sequence.</title>
        <authorList>
            <person name="Petrosino J.F."/>
            <person name="Xiang Q."/>
            <person name="Karpathy S.E."/>
            <person name="Jiang H."/>
            <person name="Yerrapragada S."/>
            <person name="Liu Y."/>
            <person name="Gioia J."/>
            <person name="Hemphill L."/>
            <person name="Gonzalez A."/>
            <person name="Raghavan T.M."/>
            <person name="Uzman A."/>
            <person name="Fox G.E."/>
            <person name="Highlander S."/>
            <person name="Reichard M."/>
            <person name="Morton R.J."/>
            <person name="Clinkenbeard K.D."/>
            <person name="Weinstock G.M."/>
        </authorList>
    </citation>
    <scope>NUCLEOTIDE SEQUENCE [LARGE SCALE GENOMIC DNA]</scope>
    <source>
        <strain>OSU18</strain>
    </source>
</reference>